<comment type="function">
    <text evidence="1">Binds to 23S rRNA. Forms part of two intersubunit bridges in the 70S ribosome.</text>
</comment>
<comment type="subunit">
    <text evidence="1">Part of the 50S ribosomal subunit. Forms a cluster with proteins L3 and L19. In the 70S ribosome, L14 and L19 interact and together make contacts with the 16S rRNA in bridges B5 and B8.</text>
</comment>
<comment type="similarity">
    <text evidence="1">Belongs to the universal ribosomal protein uL14 family.</text>
</comment>
<accession>Q28UU4</accession>
<organism>
    <name type="scientific">Jannaschia sp. (strain CCS1)</name>
    <dbReference type="NCBI Taxonomy" id="290400"/>
    <lineage>
        <taxon>Bacteria</taxon>
        <taxon>Pseudomonadati</taxon>
        <taxon>Pseudomonadota</taxon>
        <taxon>Alphaproteobacteria</taxon>
        <taxon>Rhodobacterales</taxon>
        <taxon>Roseobacteraceae</taxon>
        <taxon>Jannaschia</taxon>
    </lineage>
</organism>
<sequence>MIQMQTNLDVADNSGARRVQCIKVLGGSKRKYASVGDVIVVSVKEAIPRGRVKKGDVRKAVVVRTAKEVRREDGTAIRFDRNAAVILNNNNEPMGTRIFGPVVRELRAKNFMKIISLAPEVL</sequence>
<evidence type="ECO:0000255" key="1">
    <source>
        <dbReference type="HAMAP-Rule" id="MF_01367"/>
    </source>
</evidence>
<evidence type="ECO:0000305" key="2"/>
<proteinExistence type="inferred from homology"/>
<name>RL14_JANSC</name>
<feature type="chain" id="PRO_0000266498" description="Large ribosomal subunit protein uL14">
    <location>
        <begin position="1"/>
        <end position="122"/>
    </location>
</feature>
<reference key="1">
    <citation type="submission" date="2006-02" db="EMBL/GenBank/DDBJ databases">
        <title>Complete sequence of chromosome of Jannaschia sp. CCS1.</title>
        <authorList>
            <consortium name="US DOE Joint Genome Institute"/>
            <person name="Copeland A."/>
            <person name="Lucas S."/>
            <person name="Lapidus A."/>
            <person name="Barry K."/>
            <person name="Detter J.C."/>
            <person name="Glavina del Rio T."/>
            <person name="Hammon N."/>
            <person name="Israni S."/>
            <person name="Pitluck S."/>
            <person name="Brettin T."/>
            <person name="Bruce D."/>
            <person name="Han C."/>
            <person name="Tapia R."/>
            <person name="Gilna P."/>
            <person name="Chertkov O."/>
            <person name="Saunders E."/>
            <person name="Schmutz J."/>
            <person name="Larimer F."/>
            <person name="Land M."/>
            <person name="Kyrpides N."/>
            <person name="Lykidis A."/>
            <person name="Moran M.A."/>
            <person name="Belas R."/>
            <person name="Ye W."/>
            <person name="Buchan A."/>
            <person name="Gonzalez J.M."/>
            <person name="Schell M.A."/>
            <person name="Richardson P."/>
        </authorList>
    </citation>
    <scope>NUCLEOTIDE SEQUENCE [LARGE SCALE GENOMIC DNA]</scope>
    <source>
        <strain>CCS1</strain>
    </source>
</reference>
<dbReference type="EMBL" id="CP000264">
    <property type="protein sequence ID" value="ABD53518.1"/>
    <property type="molecule type" value="Genomic_DNA"/>
</dbReference>
<dbReference type="RefSeq" id="WP_011453726.1">
    <property type="nucleotide sequence ID" value="NC_007802.1"/>
</dbReference>
<dbReference type="SMR" id="Q28UU4"/>
<dbReference type="STRING" id="290400.Jann_0601"/>
<dbReference type="KEGG" id="jan:Jann_0601"/>
<dbReference type="eggNOG" id="COG0093">
    <property type="taxonomic scope" value="Bacteria"/>
</dbReference>
<dbReference type="HOGENOM" id="CLU_095071_2_1_5"/>
<dbReference type="OrthoDB" id="9806379at2"/>
<dbReference type="Proteomes" id="UP000008326">
    <property type="component" value="Chromosome"/>
</dbReference>
<dbReference type="GO" id="GO:0022625">
    <property type="term" value="C:cytosolic large ribosomal subunit"/>
    <property type="evidence" value="ECO:0007669"/>
    <property type="project" value="TreeGrafter"/>
</dbReference>
<dbReference type="GO" id="GO:0070180">
    <property type="term" value="F:large ribosomal subunit rRNA binding"/>
    <property type="evidence" value="ECO:0007669"/>
    <property type="project" value="TreeGrafter"/>
</dbReference>
<dbReference type="GO" id="GO:0003735">
    <property type="term" value="F:structural constituent of ribosome"/>
    <property type="evidence" value="ECO:0007669"/>
    <property type="project" value="InterPro"/>
</dbReference>
<dbReference type="GO" id="GO:0006412">
    <property type="term" value="P:translation"/>
    <property type="evidence" value="ECO:0007669"/>
    <property type="project" value="UniProtKB-UniRule"/>
</dbReference>
<dbReference type="CDD" id="cd00337">
    <property type="entry name" value="Ribosomal_uL14"/>
    <property type="match status" value="1"/>
</dbReference>
<dbReference type="FunFam" id="2.40.150.20:FF:000001">
    <property type="entry name" value="50S ribosomal protein L14"/>
    <property type="match status" value="1"/>
</dbReference>
<dbReference type="Gene3D" id="2.40.150.20">
    <property type="entry name" value="Ribosomal protein L14"/>
    <property type="match status" value="1"/>
</dbReference>
<dbReference type="HAMAP" id="MF_01367">
    <property type="entry name" value="Ribosomal_uL14"/>
    <property type="match status" value="1"/>
</dbReference>
<dbReference type="InterPro" id="IPR000218">
    <property type="entry name" value="Ribosomal_uL14"/>
</dbReference>
<dbReference type="InterPro" id="IPR005745">
    <property type="entry name" value="Ribosomal_uL14_bac-type"/>
</dbReference>
<dbReference type="InterPro" id="IPR019972">
    <property type="entry name" value="Ribosomal_uL14_CS"/>
</dbReference>
<dbReference type="InterPro" id="IPR036853">
    <property type="entry name" value="Ribosomal_uL14_sf"/>
</dbReference>
<dbReference type="NCBIfam" id="TIGR01067">
    <property type="entry name" value="rplN_bact"/>
    <property type="match status" value="1"/>
</dbReference>
<dbReference type="PANTHER" id="PTHR11761">
    <property type="entry name" value="50S/60S RIBOSOMAL PROTEIN L14/L23"/>
    <property type="match status" value="1"/>
</dbReference>
<dbReference type="PANTHER" id="PTHR11761:SF3">
    <property type="entry name" value="LARGE RIBOSOMAL SUBUNIT PROTEIN UL14M"/>
    <property type="match status" value="1"/>
</dbReference>
<dbReference type="Pfam" id="PF00238">
    <property type="entry name" value="Ribosomal_L14"/>
    <property type="match status" value="1"/>
</dbReference>
<dbReference type="SMART" id="SM01374">
    <property type="entry name" value="Ribosomal_L14"/>
    <property type="match status" value="1"/>
</dbReference>
<dbReference type="SUPFAM" id="SSF50193">
    <property type="entry name" value="Ribosomal protein L14"/>
    <property type="match status" value="1"/>
</dbReference>
<dbReference type="PROSITE" id="PS00049">
    <property type="entry name" value="RIBOSOMAL_L14"/>
    <property type="match status" value="1"/>
</dbReference>
<protein>
    <recommendedName>
        <fullName evidence="1">Large ribosomal subunit protein uL14</fullName>
    </recommendedName>
    <alternativeName>
        <fullName evidence="2">50S ribosomal protein L14</fullName>
    </alternativeName>
</protein>
<keyword id="KW-1185">Reference proteome</keyword>
<keyword id="KW-0687">Ribonucleoprotein</keyword>
<keyword id="KW-0689">Ribosomal protein</keyword>
<keyword id="KW-0694">RNA-binding</keyword>
<keyword id="KW-0699">rRNA-binding</keyword>
<gene>
    <name evidence="1" type="primary">rplN</name>
    <name type="ordered locus">Jann_0601</name>
</gene>